<organism>
    <name type="scientific">Bifidobacterium animalis subsp. lactis (strain AD011)</name>
    <dbReference type="NCBI Taxonomy" id="442563"/>
    <lineage>
        <taxon>Bacteria</taxon>
        <taxon>Bacillati</taxon>
        <taxon>Actinomycetota</taxon>
        <taxon>Actinomycetes</taxon>
        <taxon>Bifidobacteriales</taxon>
        <taxon>Bifidobacteriaceae</taxon>
        <taxon>Bifidobacterium</taxon>
    </lineage>
</organism>
<protein>
    <recommendedName>
        <fullName evidence="1">Hydroxyethylthiazole kinase</fullName>
        <ecNumber evidence="1">2.7.1.50</ecNumber>
    </recommendedName>
    <alternativeName>
        <fullName evidence="1">4-methyl-5-beta-hydroxyethylthiazole kinase</fullName>
        <shortName evidence="1">TH kinase</shortName>
        <shortName evidence="1">Thz kinase</shortName>
    </alternativeName>
</protein>
<dbReference type="EC" id="2.7.1.50" evidence="1"/>
<dbReference type="EMBL" id="CP001213">
    <property type="protein sequence ID" value="ACL29106.1"/>
    <property type="molecule type" value="Genomic_DNA"/>
</dbReference>
<dbReference type="RefSeq" id="WP_012619839.1">
    <property type="nucleotide sequence ID" value="NC_011835.1"/>
</dbReference>
<dbReference type="SMR" id="B8DSX7"/>
<dbReference type="STRING" id="442563.BLA_0814"/>
<dbReference type="KEGG" id="bla:BLA_0814"/>
<dbReference type="PATRIC" id="fig|442563.4.peg.848"/>
<dbReference type="HOGENOM" id="CLU_019943_0_1_11"/>
<dbReference type="UniPathway" id="UPA00060">
    <property type="reaction ID" value="UER00139"/>
</dbReference>
<dbReference type="Proteomes" id="UP000002456">
    <property type="component" value="Chromosome"/>
</dbReference>
<dbReference type="GO" id="GO:0005524">
    <property type="term" value="F:ATP binding"/>
    <property type="evidence" value="ECO:0007669"/>
    <property type="project" value="UniProtKB-UniRule"/>
</dbReference>
<dbReference type="GO" id="GO:0004417">
    <property type="term" value="F:hydroxyethylthiazole kinase activity"/>
    <property type="evidence" value="ECO:0007669"/>
    <property type="project" value="UniProtKB-UniRule"/>
</dbReference>
<dbReference type="GO" id="GO:0000287">
    <property type="term" value="F:magnesium ion binding"/>
    <property type="evidence" value="ECO:0007669"/>
    <property type="project" value="UniProtKB-UniRule"/>
</dbReference>
<dbReference type="GO" id="GO:0009228">
    <property type="term" value="P:thiamine biosynthetic process"/>
    <property type="evidence" value="ECO:0007669"/>
    <property type="project" value="UniProtKB-KW"/>
</dbReference>
<dbReference type="GO" id="GO:0009229">
    <property type="term" value="P:thiamine diphosphate biosynthetic process"/>
    <property type="evidence" value="ECO:0007669"/>
    <property type="project" value="UniProtKB-UniRule"/>
</dbReference>
<dbReference type="CDD" id="cd01170">
    <property type="entry name" value="THZ_kinase"/>
    <property type="match status" value="1"/>
</dbReference>
<dbReference type="Gene3D" id="3.40.1190.20">
    <property type="match status" value="1"/>
</dbReference>
<dbReference type="HAMAP" id="MF_00228">
    <property type="entry name" value="Thz_kinase"/>
    <property type="match status" value="1"/>
</dbReference>
<dbReference type="InterPro" id="IPR000417">
    <property type="entry name" value="Hyethyz_kinase"/>
</dbReference>
<dbReference type="InterPro" id="IPR029056">
    <property type="entry name" value="Ribokinase-like"/>
</dbReference>
<dbReference type="Pfam" id="PF02110">
    <property type="entry name" value="HK"/>
    <property type="match status" value="1"/>
</dbReference>
<dbReference type="PIRSF" id="PIRSF000513">
    <property type="entry name" value="Thz_kinase"/>
    <property type="match status" value="1"/>
</dbReference>
<dbReference type="PRINTS" id="PR01099">
    <property type="entry name" value="HYETHTZKNASE"/>
</dbReference>
<dbReference type="SUPFAM" id="SSF53613">
    <property type="entry name" value="Ribokinase-like"/>
    <property type="match status" value="1"/>
</dbReference>
<feature type="chain" id="PRO_0000383822" description="Hydroxyethylthiazole kinase">
    <location>
        <begin position="1"/>
        <end position="303"/>
    </location>
</feature>
<feature type="region of interest" description="Disordered" evidence="2">
    <location>
        <begin position="1"/>
        <end position="23"/>
    </location>
</feature>
<feature type="compositionally biased region" description="Polar residues" evidence="2">
    <location>
        <begin position="1"/>
        <end position="15"/>
    </location>
</feature>
<feature type="binding site" evidence="1">
    <location>
        <position position="67"/>
    </location>
    <ligand>
        <name>substrate</name>
    </ligand>
</feature>
<feature type="binding site" evidence="1">
    <location>
        <position position="142"/>
    </location>
    <ligand>
        <name>ATP</name>
        <dbReference type="ChEBI" id="CHEBI:30616"/>
    </ligand>
</feature>
<feature type="binding site" evidence="1">
    <location>
        <position position="206"/>
    </location>
    <ligand>
        <name>ATP</name>
        <dbReference type="ChEBI" id="CHEBI:30616"/>
    </ligand>
</feature>
<feature type="binding site" evidence="1">
    <location>
        <position position="233"/>
    </location>
    <ligand>
        <name>substrate</name>
    </ligand>
</feature>
<evidence type="ECO:0000255" key="1">
    <source>
        <dbReference type="HAMAP-Rule" id="MF_00228"/>
    </source>
</evidence>
<evidence type="ECO:0000256" key="2">
    <source>
        <dbReference type="SAM" id="MobiDB-lite"/>
    </source>
</evidence>
<reference key="1">
    <citation type="journal article" date="2009" name="J. Bacteriol.">
        <title>Genome sequence of the probiotic bacterium Bifidobacterium animalis subsp. lactis AD011.</title>
        <authorList>
            <person name="Kim J.F."/>
            <person name="Jeong H."/>
            <person name="Yu D.S."/>
            <person name="Choi S.-H."/>
            <person name="Hur C.-G."/>
            <person name="Park M.-S."/>
            <person name="Yoon S.H."/>
            <person name="Kim D.-W."/>
            <person name="Ji G.E."/>
            <person name="Park H.-S."/>
            <person name="Oh T.K."/>
        </authorList>
    </citation>
    <scope>NUCLEOTIDE SEQUENCE [LARGE SCALE GENOMIC DNA]</scope>
    <source>
        <strain>AD011</strain>
    </source>
</reference>
<accession>B8DSX7</accession>
<keyword id="KW-0067">ATP-binding</keyword>
<keyword id="KW-0418">Kinase</keyword>
<keyword id="KW-0460">Magnesium</keyword>
<keyword id="KW-0479">Metal-binding</keyword>
<keyword id="KW-0547">Nucleotide-binding</keyword>
<keyword id="KW-1185">Reference proteome</keyword>
<keyword id="KW-0784">Thiamine biosynthesis</keyword>
<keyword id="KW-0808">Transferase</keyword>
<sequence length="303" mass="31354">MTTASTTPNSDTSNLHEVAPDDPIRERIRQAAQNVREQTPLAQSFTNFVTINLVANAQLAAGGTAAMSFLPNDVTSLASSCGATYINVGTLLPFYRDALQEISEHLSRHGCKWVLDPVAAGVGVARTEILKGFKDYPPTVIRANASEALVLHDMWQLGDAAGTDEHNGPAGVEAADSVDAAITAATDLAAYLALHSPTHTGAVAVSGEVDLVTDGRLVYRLPGGSAMMTKITGAGCSLGGVTATYLAVADALVASLAASMLYNVSSGAAERASHGPGSFQTAFLDALWNVTPEEIASAPLYLA</sequence>
<proteinExistence type="inferred from homology"/>
<gene>
    <name evidence="1" type="primary">thiM</name>
    <name type="ordered locus">BLA_0814</name>
</gene>
<name>THIM_BIFA0</name>
<comment type="function">
    <text evidence="1">Catalyzes the phosphorylation of the hydroxyl group of 4-methyl-5-beta-hydroxyethylthiazole (THZ).</text>
</comment>
<comment type="catalytic activity">
    <reaction evidence="1">
        <text>5-(2-hydroxyethyl)-4-methylthiazole + ATP = 4-methyl-5-(2-phosphooxyethyl)-thiazole + ADP + H(+)</text>
        <dbReference type="Rhea" id="RHEA:24212"/>
        <dbReference type="ChEBI" id="CHEBI:15378"/>
        <dbReference type="ChEBI" id="CHEBI:17957"/>
        <dbReference type="ChEBI" id="CHEBI:30616"/>
        <dbReference type="ChEBI" id="CHEBI:58296"/>
        <dbReference type="ChEBI" id="CHEBI:456216"/>
        <dbReference type="EC" id="2.7.1.50"/>
    </reaction>
</comment>
<comment type="cofactor">
    <cofactor evidence="1">
        <name>Mg(2+)</name>
        <dbReference type="ChEBI" id="CHEBI:18420"/>
    </cofactor>
</comment>
<comment type="pathway">
    <text evidence="1">Cofactor biosynthesis; thiamine diphosphate biosynthesis; 4-methyl-5-(2-phosphoethyl)-thiazole from 5-(2-hydroxyethyl)-4-methylthiazole: step 1/1.</text>
</comment>
<comment type="similarity">
    <text evidence="1">Belongs to the Thz kinase family.</text>
</comment>